<proteinExistence type="inferred from homology"/>
<gene>
    <name evidence="1" type="primary">smpB</name>
    <name type="ordered locus">sync_0123</name>
</gene>
<accession>Q0IDW2</accession>
<organism>
    <name type="scientific">Synechococcus sp. (strain CC9311)</name>
    <dbReference type="NCBI Taxonomy" id="64471"/>
    <lineage>
        <taxon>Bacteria</taxon>
        <taxon>Bacillati</taxon>
        <taxon>Cyanobacteriota</taxon>
        <taxon>Cyanophyceae</taxon>
        <taxon>Synechococcales</taxon>
        <taxon>Synechococcaceae</taxon>
        <taxon>Synechococcus</taxon>
    </lineage>
</organism>
<feature type="chain" id="PRO_0000331100" description="SsrA-binding protein">
    <location>
        <begin position="1"/>
        <end position="164"/>
    </location>
</feature>
<evidence type="ECO:0000255" key="1">
    <source>
        <dbReference type="HAMAP-Rule" id="MF_00023"/>
    </source>
</evidence>
<dbReference type="EMBL" id="CP000435">
    <property type="protein sequence ID" value="ABI45450.1"/>
    <property type="molecule type" value="Genomic_DNA"/>
</dbReference>
<dbReference type="RefSeq" id="WP_011618109.1">
    <property type="nucleotide sequence ID" value="NC_008319.1"/>
</dbReference>
<dbReference type="SMR" id="Q0IDW2"/>
<dbReference type="STRING" id="64471.sync_0123"/>
<dbReference type="KEGG" id="syg:sync_0123"/>
<dbReference type="eggNOG" id="COG0691">
    <property type="taxonomic scope" value="Bacteria"/>
</dbReference>
<dbReference type="HOGENOM" id="CLU_108953_0_1_3"/>
<dbReference type="OrthoDB" id="9805462at2"/>
<dbReference type="Proteomes" id="UP000001961">
    <property type="component" value="Chromosome"/>
</dbReference>
<dbReference type="GO" id="GO:0005829">
    <property type="term" value="C:cytosol"/>
    <property type="evidence" value="ECO:0007669"/>
    <property type="project" value="TreeGrafter"/>
</dbReference>
<dbReference type="GO" id="GO:0003723">
    <property type="term" value="F:RNA binding"/>
    <property type="evidence" value="ECO:0007669"/>
    <property type="project" value="UniProtKB-UniRule"/>
</dbReference>
<dbReference type="GO" id="GO:0070929">
    <property type="term" value="P:trans-translation"/>
    <property type="evidence" value="ECO:0007669"/>
    <property type="project" value="UniProtKB-UniRule"/>
</dbReference>
<dbReference type="Gene3D" id="2.40.280.10">
    <property type="match status" value="1"/>
</dbReference>
<dbReference type="HAMAP" id="MF_00023">
    <property type="entry name" value="SmpB"/>
    <property type="match status" value="1"/>
</dbReference>
<dbReference type="InterPro" id="IPR023620">
    <property type="entry name" value="SmpB"/>
</dbReference>
<dbReference type="InterPro" id="IPR000037">
    <property type="entry name" value="SsrA-bd_prot"/>
</dbReference>
<dbReference type="InterPro" id="IPR020081">
    <property type="entry name" value="SsrA-bd_prot_CS"/>
</dbReference>
<dbReference type="NCBIfam" id="NF003843">
    <property type="entry name" value="PRK05422.1"/>
    <property type="match status" value="1"/>
</dbReference>
<dbReference type="NCBIfam" id="TIGR00086">
    <property type="entry name" value="smpB"/>
    <property type="match status" value="1"/>
</dbReference>
<dbReference type="PANTHER" id="PTHR30308:SF2">
    <property type="entry name" value="SSRA-BINDING PROTEIN"/>
    <property type="match status" value="1"/>
</dbReference>
<dbReference type="PANTHER" id="PTHR30308">
    <property type="entry name" value="TMRNA-BINDING COMPONENT OF TRANS-TRANSLATION TAGGING COMPLEX"/>
    <property type="match status" value="1"/>
</dbReference>
<dbReference type="Pfam" id="PF01668">
    <property type="entry name" value="SmpB"/>
    <property type="match status" value="1"/>
</dbReference>
<dbReference type="SUPFAM" id="SSF74982">
    <property type="entry name" value="Small protein B (SmpB)"/>
    <property type="match status" value="1"/>
</dbReference>
<dbReference type="PROSITE" id="PS01317">
    <property type="entry name" value="SSRP"/>
    <property type="match status" value="1"/>
</dbReference>
<name>SSRP_SYNS3</name>
<reference key="1">
    <citation type="journal article" date="2006" name="Proc. Natl. Acad. Sci. U.S.A.">
        <title>Genome sequence of Synechococcus CC9311: insights into adaptation to a coastal environment.</title>
        <authorList>
            <person name="Palenik B."/>
            <person name="Ren Q."/>
            <person name="Dupont C.L."/>
            <person name="Myers G.S."/>
            <person name="Heidelberg J.F."/>
            <person name="Badger J.H."/>
            <person name="Madupu R."/>
            <person name="Nelson W.C."/>
            <person name="Brinkac L.M."/>
            <person name="Dodson R.J."/>
            <person name="Durkin A.S."/>
            <person name="Daugherty S.C."/>
            <person name="Sullivan S.A."/>
            <person name="Khouri H."/>
            <person name="Mohamoud Y."/>
            <person name="Halpin R."/>
            <person name="Paulsen I.T."/>
        </authorList>
    </citation>
    <scope>NUCLEOTIDE SEQUENCE [LARGE SCALE GENOMIC DNA]</scope>
    <source>
        <strain>CC9311</strain>
    </source>
</reference>
<sequence>MGKGGGKKSAAARAAANRLLADNRLARHQYEILETLETGIELLGTEVKSVRAGQANLRDGFCLIRRGELHLHNVHISPHTHASRYFNHDPLRVRRLLAHRREIDKLRGHLEQKGLTLIPLNLHLQGSWIKVTIGLGKGRKLHDKRAAAKDKQVKKETRDAIARY</sequence>
<protein>
    <recommendedName>
        <fullName evidence="1">SsrA-binding protein</fullName>
    </recommendedName>
    <alternativeName>
        <fullName evidence="1">Small protein B</fullName>
    </alternativeName>
</protein>
<keyword id="KW-0963">Cytoplasm</keyword>
<keyword id="KW-1185">Reference proteome</keyword>
<keyword id="KW-0694">RNA-binding</keyword>
<comment type="function">
    <text evidence="1">Required for rescue of stalled ribosomes mediated by trans-translation. Binds to transfer-messenger RNA (tmRNA), required for stable association of tmRNA with ribosomes. tmRNA and SmpB together mimic tRNA shape, replacing the anticodon stem-loop with SmpB. tmRNA is encoded by the ssrA gene; the 2 termini fold to resemble tRNA(Ala) and it encodes a 'tag peptide', a short internal open reading frame. During trans-translation Ala-aminoacylated tmRNA acts like a tRNA, entering the A-site of stalled ribosomes, displacing the stalled mRNA. The ribosome then switches to translate the ORF on the tmRNA; the nascent peptide is terminated with the 'tag peptide' encoded by the tmRNA and targeted for degradation. The ribosome is freed to recommence translation, which seems to be the essential function of trans-translation.</text>
</comment>
<comment type="subcellular location">
    <subcellularLocation>
        <location evidence="1">Cytoplasm</location>
    </subcellularLocation>
    <text evidence="1">The tmRNA-SmpB complex associates with stalled 70S ribosomes.</text>
</comment>
<comment type="similarity">
    <text evidence="1">Belongs to the SmpB family.</text>
</comment>